<protein>
    <recommendedName>
        <fullName>Serine/threonine-protein phosphatase PP2A-5 catalytic subunit</fullName>
        <ecNumber>3.1.3.16</ecNumber>
    </recommendedName>
</protein>
<dbReference type="EC" id="3.1.3.16"/>
<dbReference type="EMBL" id="Z93772">
    <property type="protein sequence ID" value="CAB07807.1"/>
    <property type="molecule type" value="mRNA"/>
</dbReference>
<dbReference type="PIR" id="T03600">
    <property type="entry name" value="T03600"/>
</dbReference>
<dbReference type="RefSeq" id="NP_001312240.1">
    <property type="nucleotide sequence ID" value="NM_001325311.1"/>
</dbReference>
<dbReference type="SMR" id="O04860"/>
<dbReference type="STRING" id="4097.O04860"/>
<dbReference type="PaxDb" id="4097-O04860"/>
<dbReference type="GeneID" id="107781246"/>
<dbReference type="KEGG" id="nta:107781246"/>
<dbReference type="OrthoDB" id="1930084at2759"/>
<dbReference type="Proteomes" id="UP000084051">
    <property type="component" value="Unplaced"/>
</dbReference>
<dbReference type="GO" id="GO:0005829">
    <property type="term" value="C:cytosol"/>
    <property type="evidence" value="ECO:0000318"/>
    <property type="project" value="GO_Central"/>
</dbReference>
<dbReference type="GO" id="GO:0005634">
    <property type="term" value="C:nucleus"/>
    <property type="evidence" value="ECO:0000318"/>
    <property type="project" value="GO_Central"/>
</dbReference>
<dbReference type="GO" id="GO:0046872">
    <property type="term" value="F:metal ion binding"/>
    <property type="evidence" value="ECO:0007669"/>
    <property type="project" value="UniProtKB-KW"/>
</dbReference>
<dbReference type="GO" id="GO:0004722">
    <property type="term" value="F:protein serine/threonine phosphatase activity"/>
    <property type="evidence" value="ECO:0000318"/>
    <property type="project" value="GO_Central"/>
</dbReference>
<dbReference type="GO" id="GO:0000278">
    <property type="term" value="P:mitotic cell cycle"/>
    <property type="evidence" value="ECO:0000318"/>
    <property type="project" value="GO_Central"/>
</dbReference>
<dbReference type="CDD" id="cd07415">
    <property type="entry name" value="MPP_PP2A_PP4_PP6"/>
    <property type="match status" value="1"/>
</dbReference>
<dbReference type="FunFam" id="3.60.21.10:FF:000003">
    <property type="entry name" value="Serine/threonine-protein phosphatase"/>
    <property type="match status" value="1"/>
</dbReference>
<dbReference type="Gene3D" id="3.60.21.10">
    <property type="match status" value="1"/>
</dbReference>
<dbReference type="InterPro" id="IPR004843">
    <property type="entry name" value="Calcineurin-like_PHP_ApaH"/>
</dbReference>
<dbReference type="InterPro" id="IPR029052">
    <property type="entry name" value="Metallo-depent_PP-like"/>
</dbReference>
<dbReference type="InterPro" id="IPR047129">
    <property type="entry name" value="PPA2-like"/>
</dbReference>
<dbReference type="InterPro" id="IPR006186">
    <property type="entry name" value="Ser/Thr-sp_prot-phosphatase"/>
</dbReference>
<dbReference type="PANTHER" id="PTHR45619">
    <property type="entry name" value="SERINE/THREONINE-PROTEIN PHOSPHATASE PP2A-RELATED"/>
    <property type="match status" value="1"/>
</dbReference>
<dbReference type="Pfam" id="PF00149">
    <property type="entry name" value="Metallophos"/>
    <property type="match status" value="1"/>
</dbReference>
<dbReference type="PRINTS" id="PR00114">
    <property type="entry name" value="STPHPHTASE"/>
</dbReference>
<dbReference type="SMART" id="SM00156">
    <property type="entry name" value="PP2Ac"/>
    <property type="match status" value="1"/>
</dbReference>
<dbReference type="SUPFAM" id="SSF56300">
    <property type="entry name" value="Metallo-dependent phosphatases"/>
    <property type="match status" value="1"/>
</dbReference>
<dbReference type="PROSITE" id="PS00125">
    <property type="entry name" value="SER_THR_PHOSPHATASE"/>
    <property type="match status" value="1"/>
</dbReference>
<reference key="1">
    <citation type="journal article" date="1998" name="Plant Mol. Biol.">
        <title>Multiple genes encoding serine/threonine protein phosphatases and their differential expression in Nicotiana tabacum.</title>
        <authorList>
            <person name="Suh M."/>
            <person name="Cho H."/>
            <person name="Kim Y."/>
            <person name="Liu J."/>
            <person name="Lee H."/>
        </authorList>
    </citation>
    <scope>NUCLEOTIDE SEQUENCE [MRNA]</scope>
    <source>
        <strain>cv. Xanthi</strain>
    </source>
</reference>
<gene>
    <name type="primary">NPP5</name>
</gene>
<accession>O04860</accession>
<comment type="catalytic activity">
    <reaction>
        <text>O-phospho-L-seryl-[protein] + H2O = L-seryl-[protein] + phosphate</text>
        <dbReference type="Rhea" id="RHEA:20629"/>
        <dbReference type="Rhea" id="RHEA-COMP:9863"/>
        <dbReference type="Rhea" id="RHEA-COMP:11604"/>
        <dbReference type="ChEBI" id="CHEBI:15377"/>
        <dbReference type="ChEBI" id="CHEBI:29999"/>
        <dbReference type="ChEBI" id="CHEBI:43474"/>
        <dbReference type="ChEBI" id="CHEBI:83421"/>
        <dbReference type="EC" id="3.1.3.16"/>
    </reaction>
</comment>
<comment type="catalytic activity">
    <reaction>
        <text>O-phospho-L-threonyl-[protein] + H2O = L-threonyl-[protein] + phosphate</text>
        <dbReference type="Rhea" id="RHEA:47004"/>
        <dbReference type="Rhea" id="RHEA-COMP:11060"/>
        <dbReference type="Rhea" id="RHEA-COMP:11605"/>
        <dbReference type="ChEBI" id="CHEBI:15377"/>
        <dbReference type="ChEBI" id="CHEBI:30013"/>
        <dbReference type="ChEBI" id="CHEBI:43474"/>
        <dbReference type="ChEBI" id="CHEBI:61977"/>
        <dbReference type="EC" id="3.1.3.16"/>
    </reaction>
</comment>
<comment type="cofactor">
    <cofactor evidence="1">
        <name>Mn(2+)</name>
        <dbReference type="ChEBI" id="CHEBI:29035"/>
    </cofactor>
    <text evidence="1">Binds 2 manganese ions per subunit.</text>
</comment>
<comment type="subcellular location">
    <subcellularLocation>
        <location evidence="1">Cytoplasm</location>
    </subcellularLocation>
</comment>
<comment type="similarity">
    <text evidence="2">Belongs to the PPP phosphatase family. PP-2A subfamily.</text>
</comment>
<sequence length="314" mass="35640">MSSSDLVAASIQGNLDEQISQLMQCKPLSEPDVRALCEKAKEILAEESNVQPVKSPVTICGDIHGQFHDLAELFRIGGQCPDTNYLFMGDYVDRGYYSVETVTLLVALKVRYPQRLTILRGNHESRQITQVYGFYDECLRKYGNANVWKTFTDLFDYFPLTALVESEIFCLHGGLSPSIETLDNVRSFDRVQEVPHEGAMCDLLWSDPDDCCGWGMSPRGAGYTFGQDISEQFHQTNNLKLIARAHQLVMEGYNWSHEQKVVTIFSAPNYCYRCGNMASILEVDDCRGHTFIQFDPAPRRGEPDVTRRTPDYFL</sequence>
<proteinExistence type="evidence at transcript level"/>
<feature type="chain" id="PRO_0000058866" description="Serine/threonine-protein phosphatase PP2A-5 catalytic subunit">
    <location>
        <begin position="1"/>
        <end position="314"/>
    </location>
</feature>
<feature type="active site" description="Proton donor" evidence="1">
    <location>
        <position position="123"/>
    </location>
</feature>
<feature type="binding site" evidence="1">
    <location>
        <position position="62"/>
    </location>
    <ligand>
        <name>Mn(2+)</name>
        <dbReference type="ChEBI" id="CHEBI:29035"/>
        <label>1</label>
    </ligand>
</feature>
<feature type="binding site" evidence="1">
    <location>
        <position position="64"/>
    </location>
    <ligand>
        <name>Mn(2+)</name>
        <dbReference type="ChEBI" id="CHEBI:29035"/>
        <label>1</label>
    </ligand>
</feature>
<feature type="binding site" evidence="1">
    <location>
        <position position="90"/>
    </location>
    <ligand>
        <name>Mn(2+)</name>
        <dbReference type="ChEBI" id="CHEBI:29035"/>
        <label>1</label>
    </ligand>
</feature>
<feature type="binding site" evidence="1">
    <location>
        <position position="90"/>
    </location>
    <ligand>
        <name>Mn(2+)</name>
        <dbReference type="ChEBI" id="CHEBI:29035"/>
        <label>2</label>
    </ligand>
</feature>
<feature type="binding site" evidence="1">
    <location>
        <position position="122"/>
    </location>
    <ligand>
        <name>Mn(2+)</name>
        <dbReference type="ChEBI" id="CHEBI:29035"/>
        <label>2</label>
    </ligand>
</feature>
<feature type="binding site" evidence="1">
    <location>
        <position position="172"/>
    </location>
    <ligand>
        <name>Mn(2+)</name>
        <dbReference type="ChEBI" id="CHEBI:29035"/>
        <label>2</label>
    </ligand>
</feature>
<feature type="binding site" evidence="1">
    <location>
        <position position="246"/>
    </location>
    <ligand>
        <name>Mn(2+)</name>
        <dbReference type="ChEBI" id="CHEBI:29035"/>
        <label>2</label>
    </ligand>
</feature>
<keyword id="KW-0963">Cytoplasm</keyword>
<keyword id="KW-0378">Hydrolase</keyword>
<keyword id="KW-0464">Manganese</keyword>
<keyword id="KW-0479">Metal-binding</keyword>
<keyword id="KW-0904">Protein phosphatase</keyword>
<keyword id="KW-1185">Reference proteome</keyword>
<evidence type="ECO:0000250" key="1"/>
<evidence type="ECO:0000305" key="2"/>
<organism>
    <name type="scientific">Nicotiana tabacum</name>
    <name type="common">Common tobacco</name>
    <dbReference type="NCBI Taxonomy" id="4097"/>
    <lineage>
        <taxon>Eukaryota</taxon>
        <taxon>Viridiplantae</taxon>
        <taxon>Streptophyta</taxon>
        <taxon>Embryophyta</taxon>
        <taxon>Tracheophyta</taxon>
        <taxon>Spermatophyta</taxon>
        <taxon>Magnoliopsida</taxon>
        <taxon>eudicotyledons</taxon>
        <taxon>Gunneridae</taxon>
        <taxon>Pentapetalae</taxon>
        <taxon>asterids</taxon>
        <taxon>lamiids</taxon>
        <taxon>Solanales</taxon>
        <taxon>Solanaceae</taxon>
        <taxon>Nicotianoideae</taxon>
        <taxon>Nicotianeae</taxon>
        <taxon>Nicotiana</taxon>
    </lineage>
</organism>
<name>PP2A5_TOBAC</name>